<protein>
    <recommendedName>
        <fullName evidence="1">Probable [Fe-S]-dependent transcriptional repressor</fullName>
    </recommendedName>
</protein>
<comment type="function">
    <text evidence="1">May function as a transcriptional regulator that controls feoABC expression.</text>
</comment>
<comment type="similarity">
    <text evidence="1">Belongs to the FeoC family.</text>
</comment>
<keyword id="KW-0238">DNA-binding</keyword>
<keyword id="KW-0408">Iron</keyword>
<keyword id="KW-0411">Iron-sulfur</keyword>
<keyword id="KW-0479">Metal-binding</keyword>
<keyword id="KW-1185">Reference proteome</keyword>
<keyword id="KW-0678">Repressor</keyword>
<keyword id="KW-0804">Transcription</keyword>
<keyword id="KW-0805">Transcription regulation</keyword>
<dbReference type="EMBL" id="CP001063">
    <property type="protein sequence ID" value="ACD08559.1"/>
    <property type="molecule type" value="Genomic_DNA"/>
</dbReference>
<dbReference type="RefSeq" id="WP_000157586.1">
    <property type="nucleotide sequence ID" value="NC_010658.1"/>
</dbReference>
<dbReference type="SMR" id="B2U3M0"/>
<dbReference type="STRING" id="344609.SbBS512_E3791"/>
<dbReference type="GeneID" id="86948257"/>
<dbReference type="KEGG" id="sbc:SbBS512_E3791"/>
<dbReference type="HOGENOM" id="CLU_189182_0_0_6"/>
<dbReference type="Proteomes" id="UP000001030">
    <property type="component" value="Chromosome"/>
</dbReference>
<dbReference type="GO" id="GO:0003677">
    <property type="term" value="F:DNA binding"/>
    <property type="evidence" value="ECO:0007669"/>
    <property type="project" value="UniProtKB-KW"/>
</dbReference>
<dbReference type="GO" id="GO:0005506">
    <property type="term" value="F:iron ion binding"/>
    <property type="evidence" value="ECO:0007669"/>
    <property type="project" value="UniProtKB-UniRule"/>
</dbReference>
<dbReference type="GO" id="GO:0051536">
    <property type="term" value="F:iron-sulfur cluster binding"/>
    <property type="evidence" value="ECO:0007669"/>
    <property type="project" value="UniProtKB-KW"/>
</dbReference>
<dbReference type="Gene3D" id="1.10.10.10">
    <property type="entry name" value="Winged helix-like DNA-binding domain superfamily/Winged helix DNA-binding domain"/>
    <property type="match status" value="1"/>
</dbReference>
<dbReference type="HAMAP" id="MF_01586">
    <property type="entry name" value="FeoC"/>
    <property type="match status" value="1"/>
</dbReference>
<dbReference type="InterPro" id="IPR023732">
    <property type="entry name" value="FeoC"/>
</dbReference>
<dbReference type="InterPro" id="IPR015102">
    <property type="entry name" value="Tscrpt_reg_HTH_FeoC"/>
</dbReference>
<dbReference type="InterPro" id="IPR036388">
    <property type="entry name" value="WH-like_DNA-bd_sf"/>
</dbReference>
<dbReference type="InterPro" id="IPR036390">
    <property type="entry name" value="WH_DNA-bd_sf"/>
</dbReference>
<dbReference type="NCBIfam" id="NF011960">
    <property type="entry name" value="PRK15431.1"/>
    <property type="match status" value="1"/>
</dbReference>
<dbReference type="Pfam" id="PF09012">
    <property type="entry name" value="FeoC"/>
    <property type="match status" value="1"/>
</dbReference>
<dbReference type="SUPFAM" id="SSF46785">
    <property type="entry name" value="Winged helix' DNA-binding domain"/>
    <property type="match status" value="1"/>
</dbReference>
<feature type="chain" id="PRO_1000201338" description="Probable [Fe-S]-dependent transcriptional repressor">
    <location>
        <begin position="1"/>
        <end position="78"/>
    </location>
</feature>
<feature type="binding site" evidence="1">
    <location>
        <position position="56"/>
    </location>
    <ligand>
        <name>iron-sulfur cluster</name>
        <dbReference type="ChEBI" id="CHEBI:30408"/>
    </ligand>
</feature>
<feature type="binding site" evidence="1">
    <location>
        <position position="61"/>
    </location>
    <ligand>
        <name>iron-sulfur cluster</name>
        <dbReference type="ChEBI" id="CHEBI:30408"/>
    </ligand>
</feature>
<feature type="binding site" evidence="1">
    <location>
        <position position="64"/>
    </location>
    <ligand>
        <name>iron-sulfur cluster</name>
        <dbReference type="ChEBI" id="CHEBI:30408"/>
    </ligand>
</feature>
<feature type="binding site" evidence="1">
    <location>
        <position position="70"/>
    </location>
    <ligand>
        <name>iron-sulfur cluster</name>
        <dbReference type="ChEBI" id="CHEBI:30408"/>
    </ligand>
</feature>
<accession>B2U3M0</accession>
<evidence type="ECO:0000255" key="1">
    <source>
        <dbReference type="HAMAP-Rule" id="MF_01586"/>
    </source>
</evidence>
<sequence length="78" mass="8660">MASLIQVRDLLALRGRMEAAQISQTLNTPQPMINAMLQQLESMGKAVRIQEEPDGCLSGSCKSCPEGKACLREWWALR</sequence>
<reference key="1">
    <citation type="submission" date="2008-05" db="EMBL/GenBank/DDBJ databases">
        <title>Complete sequence of Shigella boydii serotype 18 strain BS512.</title>
        <authorList>
            <person name="Rasko D.A."/>
            <person name="Rosovitz M."/>
            <person name="Maurelli A.T."/>
            <person name="Myers G."/>
            <person name="Seshadri R."/>
            <person name="Cer R."/>
            <person name="Jiang L."/>
            <person name="Ravel J."/>
            <person name="Sebastian Y."/>
        </authorList>
    </citation>
    <scope>NUCLEOTIDE SEQUENCE [LARGE SCALE GENOMIC DNA]</scope>
    <source>
        <strain>CDC 3083-94 / BS512</strain>
    </source>
</reference>
<proteinExistence type="inferred from homology"/>
<name>FEOC_SHIB3</name>
<organism>
    <name type="scientific">Shigella boydii serotype 18 (strain CDC 3083-94 / BS512)</name>
    <dbReference type="NCBI Taxonomy" id="344609"/>
    <lineage>
        <taxon>Bacteria</taxon>
        <taxon>Pseudomonadati</taxon>
        <taxon>Pseudomonadota</taxon>
        <taxon>Gammaproteobacteria</taxon>
        <taxon>Enterobacterales</taxon>
        <taxon>Enterobacteriaceae</taxon>
        <taxon>Shigella</taxon>
    </lineage>
</organism>
<gene>
    <name evidence="1" type="primary">feoC</name>
    <name type="ordered locus">SbBS512_E3791</name>
</gene>